<keyword id="KW-0150">Chloroplast</keyword>
<keyword id="KW-0240">DNA-directed RNA polymerase</keyword>
<keyword id="KW-0460">Magnesium</keyword>
<keyword id="KW-0479">Metal-binding</keyword>
<keyword id="KW-0548">Nucleotidyltransferase</keyword>
<keyword id="KW-0934">Plastid</keyword>
<keyword id="KW-0804">Transcription</keyword>
<keyword id="KW-0808">Transferase</keyword>
<keyword id="KW-0862">Zinc</keyword>
<feature type="chain" id="PRO_0000353502" description="DNA-directed RNA polymerase subunit beta'">
    <location>
        <begin position="1"/>
        <end position="693"/>
    </location>
</feature>
<feature type="binding site" evidence="1">
    <location>
        <position position="76"/>
    </location>
    <ligand>
        <name>Zn(2+)</name>
        <dbReference type="ChEBI" id="CHEBI:29105"/>
    </ligand>
</feature>
<feature type="binding site" evidence="1">
    <location>
        <position position="78"/>
    </location>
    <ligand>
        <name>Zn(2+)</name>
        <dbReference type="ChEBI" id="CHEBI:29105"/>
    </ligand>
</feature>
<feature type="binding site" evidence="1">
    <location>
        <position position="94"/>
    </location>
    <ligand>
        <name>Zn(2+)</name>
        <dbReference type="ChEBI" id="CHEBI:29105"/>
    </ligand>
</feature>
<feature type="binding site" evidence="1">
    <location>
        <position position="97"/>
    </location>
    <ligand>
        <name>Zn(2+)</name>
        <dbReference type="ChEBI" id="CHEBI:29105"/>
    </ligand>
</feature>
<feature type="binding site" evidence="1">
    <location>
        <position position="496"/>
    </location>
    <ligand>
        <name>Mg(2+)</name>
        <dbReference type="ChEBI" id="CHEBI:18420"/>
    </ligand>
</feature>
<feature type="binding site" evidence="1">
    <location>
        <position position="498"/>
    </location>
    <ligand>
        <name>Mg(2+)</name>
        <dbReference type="ChEBI" id="CHEBI:18420"/>
    </ligand>
</feature>
<feature type="binding site" evidence="1">
    <location>
        <position position="500"/>
    </location>
    <ligand>
        <name>Mg(2+)</name>
        <dbReference type="ChEBI" id="CHEBI:18420"/>
    </ligand>
</feature>
<evidence type="ECO:0000255" key="1">
    <source>
        <dbReference type="HAMAP-Rule" id="MF_01323"/>
    </source>
</evidence>
<comment type="function">
    <text evidence="1">DNA-dependent RNA polymerase catalyzes the transcription of DNA into RNA using the four ribonucleoside triphosphates as substrates.</text>
</comment>
<comment type="catalytic activity">
    <reaction evidence="1">
        <text>RNA(n) + a ribonucleoside 5'-triphosphate = RNA(n+1) + diphosphate</text>
        <dbReference type="Rhea" id="RHEA:21248"/>
        <dbReference type="Rhea" id="RHEA-COMP:14527"/>
        <dbReference type="Rhea" id="RHEA-COMP:17342"/>
        <dbReference type="ChEBI" id="CHEBI:33019"/>
        <dbReference type="ChEBI" id="CHEBI:61557"/>
        <dbReference type="ChEBI" id="CHEBI:140395"/>
        <dbReference type="EC" id="2.7.7.6"/>
    </reaction>
</comment>
<comment type="cofactor">
    <cofactor evidence="1">
        <name>Mg(2+)</name>
        <dbReference type="ChEBI" id="CHEBI:18420"/>
    </cofactor>
    <text evidence="1">Binds 1 Mg(2+) ion per subunit.</text>
</comment>
<comment type="cofactor">
    <cofactor evidence="1">
        <name>Zn(2+)</name>
        <dbReference type="ChEBI" id="CHEBI:29105"/>
    </cofactor>
    <text evidence="1">Binds 1 Zn(2+) ion per subunit.</text>
</comment>
<comment type="subunit">
    <text evidence="1">In plastids the minimal PEP RNA polymerase catalytic core is composed of four subunits: alpha, beta, beta', and beta''. When a (nuclear-encoded) sigma factor is associated with the core the holoenzyme is formed, which can initiate transcription.</text>
</comment>
<comment type="subcellular location">
    <subcellularLocation>
        <location evidence="1">Plastid</location>
        <location evidence="1">Chloroplast</location>
    </subcellularLocation>
</comment>
<comment type="similarity">
    <text evidence="1">Belongs to the RNA polymerase beta' chain family. RpoC1 subfamily.</text>
</comment>
<accession>A1XFU6</accession>
<gene>
    <name evidence="1" type="primary">rpoC1</name>
</gene>
<protein>
    <recommendedName>
        <fullName evidence="1">DNA-directed RNA polymerase subunit beta'</fullName>
        <ecNumber evidence="1">2.7.7.6</ecNumber>
    </recommendedName>
    <alternativeName>
        <fullName evidence="1">PEP</fullName>
    </alternativeName>
    <alternativeName>
        <fullName evidence="1">Plastid-encoded RNA polymerase subunit beta'</fullName>
        <shortName evidence="1">RNA polymerase subunit beta'</shortName>
    </alternativeName>
</protein>
<proteinExistence type="inferred from homology"/>
<sequence>MNQNFSSMIDQYKHQQLRIGSVSPKQIHAWANKILPNGEIVGEVTKPYTFHYKTNKPEKDGLFCERIFGPIKSGICACGNYRVIGGEKEEPKFCEQCGVESVDSRIRRYQMGYIKLACPVTHVWYLKRLPSYIANLSDKPLKELEGLVYCDFSFARPIAKKPTFLRLRGSFEYEIQSRKYSIPLFFTTQGFDTFRNREISTGATAIREQLADPDLRIIIDRSLVEWKELGEEGSTGNDWEDRKIGRRKDFLVRRMELAKHFLRTNVEPEWMVLCLLPVLPPELRPIIQIDGGKPMSSDINELYRRVIYRNNTLTDLLTTSRSTPGELVMCQEKLVQEAVDTLLDNGIRGQPMRDGHNKVYKSFSDVIEGKEGRFRETLLGKRVDYSGRSVIVVGPSLSLHRCGLPREIAIELFQTFVIRGLIRQNLASNIGLAKSKIREKEPIVWEILQEVMQGHPVLLNRAPTLHRLGIQAFQPILVEGRAICLHPLVCKGFNADFDGDQMAVHVPLSLEAQAEARLLMFSHTNLLSPAIGDPISVPTQDMLMGLYVLTMGNRRGICANRYNPCNSRNYQNERTDHNNYKYRKGKEPYFCSSYDALGAYRQKGIDLYSTLWLRWRLDQRVIASINREIPIEVQYESLGTYHEIYDHYRVVRSVKKGMLCIYIRTTVGHISFYREIEEAVQGFCRSYSYSYGT</sequence>
<name>RPOC1_NUPAD</name>
<reference key="1">
    <citation type="journal article" date="2007" name="BMC Genomics">
        <title>Comparative chloroplast genomics: analyses including new sequences from the angiosperms Nuphar advena and Ranunculus macranthus.</title>
        <authorList>
            <person name="Raubeson L.A."/>
            <person name="Peery R."/>
            <person name="Chumley T.W."/>
            <person name="Dziubek C."/>
            <person name="Fourcade H.M."/>
            <person name="Boore J.L."/>
            <person name="Jansen R.K."/>
        </authorList>
    </citation>
    <scope>NUCLEOTIDE SEQUENCE [LARGE SCALE GENOMIC DNA]</scope>
</reference>
<organism>
    <name type="scientific">Nuphar advena</name>
    <name type="common">Common spatterdock</name>
    <name type="synonym">Nuphar lutea subsp. advena</name>
    <dbReference type="NCBI Taxonomy" id="77108"/>
    <lineage>
        <taxon>Eukaryota</taxon>
        <taxon>Viridiplantae</taxon>
        <taxon>Streptophyta</taxon>
        <taxon>Embryophyta</taxon>
        <taxon>Tracheophyta</taxon>
        <taxon>Spermatophyta</taxon>
        <taxon>Magnoliopsida</taxon>
        <taxon>Nymphaeales</taxon>
        <taxon>Nymphaeaceae</taxon>
        <taxon>Nuphar</taxon>
    </lineage>
</organism>
<dbReference type="EC" id="2.7.7.6" evidence="1"/>
<dbReference type="EMBL" id="DQ354691">
    <property type="protein sequence ID" value="ABC60449.1"/>
    <property type="molecule type" value="Genomic_DNA"/>
</dbReference>
<dbReference type="RefSeq" id="YP_001001525.1">
    <property type="nucleotide sequence ID" value="NC_008788.1"/>
</dbReference>
<dbReference type="SMR" id="A1XFU6"/>
<dbReference type="GeneID" id="4699603"/>
<dbReference type="GO" id="GO:0009507">
    <property type="term" value="C:chloroplast"/>
    <property type="evidence" value="ECO:0007669"/>
    <property type="project" value="UniProtKB-SubCell"/>
</dbReference>
<dbReference type="GO" id="GO:0000428">
    <property type="term" value="C:DNA-directed RNA polymerase complex"/>
    <property type="evidence" value="ECO:0007669"/>
    <property type="project" value="UniProtKB-KW"/>
</dbReference>
<dbReference type="GO" id="GO:0005739">
    <property type="term" value="C:mitochondrion"/>
    <property type="evidence" value="ECO:0007669"/>
    <property type="project" value="GOC"/>
</dbReference>
<dbReference type="GO" id="GO:0003677">
    <property type="term" value="F:DNA binding"/>
    <property type="evidence" value="ECO:0007669"/>
    <property type="project" value="UniProtKB-UniRule"/>
</dbReference>
<dbReference type="GO" id="GO:0003899">
    <property type="term" value="F:DNA-directed RNA polymerase activity"/>
    <property type="evidence" value="ECO:0007669"/>
    <property type="project" value="UniProtKB-UniRule"/>
</dbReference>
<dbReference type="GO" id="GO:0000287">
    <property type="term" value="F:magnesium ion binding"/>
    <property type="evidence" value="ECO:0007669"/>
    <property type="project" value="UniProtKB-UniRule"/>
</dbReference>
<dbReference type="GO" id="GO:0008270">
    <property type="term" value="F:zinc ion binding"/>
    <property type="evidence" value="ECO:0007669"/>
    <property type="project" value="UniProtKB-UniRule"/>
</dbReference>
<dbReference type="GO" id="GO:0006351">
    <property type="term" value="P:DNA-templated transcription"/>
    <property type="evidence" value="ECO:0007669"/>
    <property type="project" value="UniProtKB-UniRule"/>
</dbReference>
<dbReference type="FunFam" id="4.10.860.120:FF:000007">
    <property type="entry name" value="DNA-directed RNA polymerase subunit gamma"/>
    <property type="match status" value="1"/>
</dbReference>
<dbReference type="Gene3D" id="1.10.40.90">
    <property type="match status" value="1"/>
</dbReference>
<dbReference type="Gene3D" id="2.40.40.20">
    <property type="match status" value="1"/>
</dbReference>
<dbReference type="Gene3D" id="4.10.860.120">
    <property type="entry name" value="RNA polymerase II, clamp domain"/>
    <property type="match status" value="1"/>
</dbReference>
<dbReference type="Gene3D" id="1.10.274.100">
    <property type="entry name" value="RNA polymerase Rpb1, domain 3"/>
    <property type="match status" value="1"/>
</dbReference>
<dbReference type="HAMAP" id="MF_01323">
    <property type="entry name" value="RNApol_bact_RpoC1"/>
    <property type="match status" value="1"/>
</dbReference>
<dbReference type="InterPro" id="IPR045867">
    <property type="entry name" value="DNA-dir_RpoC_beta_prime"/>
</dbReference>
<dbReference type="InterPro" id="IPR000722">
    <property type="entry name" value="RNA_pol_asu"/>
</dbReference>
<dbReference type="InterPro" id="IPR006592">
    <property type="entry name" value="RNA_pol_N"/>
</dbReference>
<dbReference type="InterPro" id="IPR007080">
    <property type="entry name" value="RNA_pol_Rpb1_1"/>
</dbReference>
<dbReference type="InterPro" id="IPR042102">
    <property type="entry name" value="RNA_pol_Rpb1_3_sf"/>
</dbReference>
<dbReference type="InterPro" id="IPR044893">
    <property type="entry name" value="RNA_pol_Rpb1_clamp_domain"/>
</dbReference>
<dbReference type="InterPro" id="IPR034678">
    <property type="entry name" value="RNApol_RpoC1"/>
</dbReference>
<dbReference type="PANTHER" id="PTHR19376">
    <property type="entry name" value="DNA-DIRECTED RNA POLYMERASE"/>
    <property type="match status" value="1"/>
</dbReference>
<dbReference type="PANTHER" id="PTHR19376:SF54">
    <property type="entry name" value="DNA-DIRECTED RNA POLYMERASE SUBUNIT BETA"/>
    <property type="match status" value="1"/>
</dbReference>
<dbReference type="Pfam" id="PF04997">
    <property type="entry name" value="RNA_pol_Rpb1_1"/>
    <property type="match status" value="2"/>
</dbReference>
<dbReference type="Pfam" id="PF00623">
    <property type="entry name" value="RNA_pol_Rpb1_2"/>
    <property type="match status" value="2"/>
</dbReference>
<dbReference type="SMART" id="SM00663">
    <property type="entry name" value="RPOLA_N"/>
    <property type="match status" value="1"/>
</dbReference>
<dbReference type="SUPFAM" id="SSF64484">
    <property type="entry name" value="beta and beta-prime subunits of DNA dependent RNA-polymerase"/>
    <property type="match status" value="1"/>
</dbReference>
<geneLocation type="chloroplast"/>